<organism>
    <name type="scientific">Escherichia coli O6:K15:H31 (strain 536 / UPEC)</name>
    <dbReference type="NCBI Taxonomy" id="362663"/>
    <lineage>
        <taxon>Bacteria</taxon>
        <taxon>Pseudomonadati</taxon>
        <taxon>Pseudomonadota</taxon>
        <taxon>Gammaproteobacteria</taxon>
        <taxon>Enterobacterales</taxon>
        <taxon>Enterobacteriaceae</taxon>
        <taxon>Escherichia</taxon>
    </lineage>
</organism>
<protein>
    <recommendedName>
        <fullName evidence="1">Phosphoenolpyruvate synthase regulatory protein</fullName>
        <shortName evidence="1">PEP synthase regulatory protein</shortName>
        <shortName evidence="1">PSRP</shortName>
        <ecNumber evidence="1">2.7.11.33</ecNumber>
        <ecNumber evidence="1">2.7.4.28</ecNumber>
    </recommendedName>
    <alternativeName>
        <fullName evidence="1">Pyruvate, water dikinase regulatory protein</fullName>
    </alternativeName>
</protein>
<keyword id="KW-0418">Kinase</keyword>
<keyword id="KW-0547">Nucleotide-binding</keyword>
<keyword id="KW-0723">Serine/threonine-protein kinase</keyword>
<keyword id="KW-0808">Transferase</keyword>
<dbReference type="EC" id="2.7.11.33" evidence="1"/>
<dbReference type="EC" id="2.7.4.28" evidence="1"/>
<dbReference type="EMBL" id="CP000247">
    <property type="protein sequence ID" value="ABG69654.1"/>
    <property type="molecule type" value="Genomic_DNA"/>
</dbReference>
<dbReference type="RefSeq" id="WP_000368055.1">
    <property type="nucleotide sequence ID" value="NC_008253.1"/>
</dbReference>
<dbReference type="SMR" id="Q0THC5"/>
<dbReference type="KEGG" id="ecp:ECP_1651"/>
<dbReference type="HOGENOM" id="CLU_046206_1_0_6"/>
<dbReference type="Proteomes" id="UP000009182">
    <property type="component" value="Chromosome"/>
</dbReference>
<dbReference type="GO" id="GO:0043531">
    <property type="term" value="F:ADP binding"/>
    <property type="evidence" value="ECO:0007669"/>
    <property type="project" value="UniProtKB-UniRule"/>
</dbReference>
<dbReference type="GO" id="GO:0005524">
    <property type="term" value="F:ATP binding"/>
    <property type="evidence" value="ECO:0007669"/>
    <property type="project" value="InterPro"/>
</dbReference>
<dbReference type="GO" id="GO:0016776">
    <property type="term" value="F:phosphotransferase activity, phosphate group as acceptor"/>
    <property type="evidence" value="ECO:0007669"/>
    <property type="project" value="UniProtKB-UniRule"/>
</dbReference>
<dbReference type="GO" id="GO:0004674">
    <property type="term" value="F:protein serine/threonine kinase activity"/>
    <property type="evidence" value="ECO:0007669"/>
    <property type="project" value="UniProtKB-UniRule"/>
</dbReference>
<dbReference type="HAMAP" id="MF_01062">
    <property type="entry name" value="PSRP"/>
    <property type="match status" value="1"/>
</dbReference>
<dbReference type="InterPro" id="IPR005177">
    <property type="entry name" value="Kinase-pyrophosphorylase"/>
</dbReference>
<dbReference type="InterPro" id="IPR026530">
    <property type="entry name" value="PSRP"/>
</dbReference>
<dbReference type="NCBIfam" id="NF003742">
    <property type="entry name" value="PRK05339.1"/>
    <property type="match status" value="1"/>
</dbReference>
<dbReference type="PANTHER" id="PTHR31756">
    <property type="entry name" value="PYRUVATE, PHOSPHATE DIKINASE REGULATORY PROTEIN 1, CHLOROPLASTIC"/>
    <property type="match status" value="1"/>
</dbReference>
<dbReference type="PANTHER" id="PTHR31756:SF3">
    <property type="entry name" value="PYRUVATE, PHOSPHATE DIKINASE REGULATORY PROTEIN 1, CHLOROPLASTIC"/>
    <property type="match status" value="1"/>
</dbReference>
<dbReference type="Pfam" id="PF03618">
    <property type="entry name" value="Kinase-PPPase"/>
    <property type="match status" value="1"/>
</dbReference>
<proteinExistence type="inferred from homology"/>
<gene>
    <name evidence="1" type="primary">ppsR</name>
    <name type="ordered locus">ECP_1651</name>
</gene>
<sequence>MDNAVDRHVFYISDGTAITAEVLGHAVMSQFPVTISSITLPFVENESRARAVKDQIDAIYHQTGVRPLVFYSIVLPEIRAIILRSEGFCQDIVQALVAPLQQEMKLDPTPIAHRTHGLNPNNLNKYDARIAAIDYTLAHDDGISLRNLDQAQVILLGVSRCGKTPTSLYLAMQFGIRAANYPFIADDMDNLVLPASLKPLQHKLFGLTIDPERLAAIREERRENSRYASLRQCRMEVAEVEALYRKNQIPWINSTNYSVEEIATKILDIMGLSRRMY</sequence>
<reference key="1">
    <citation type="journal article" date="2006" name="Mol. Microbiol.">
        <title>Role of pathogenicity island-associated integrases in the genome plasticity of uropathogenic Escherichia coli strain 536.</title>
        <authorList>
            <person name="Hochhut B."/>
            <person name="Wilde C."/>
            <person name="Balling G."/>
            <person name="Middendorf B."/>
            <person name="Dobrindt U."/>
            <person name="Brzuszkiewicz E."/>
            <person name="Gottschalk G."/>
            <person name="Carniel E."/>
            <person name="Hacker J."/>
        </authorList>
    </citation>
    <scope>NUCLEOTIDE SEQUENCE [LARGE SCALE GENOMIC DNA]</scope>
    <source>
        <strain>536 / UPEC</strain>
    </source>
</reference>
<name>PSRP_ECOL5</name>
<comment type="function">
    <text evidence="1">Bifunctional serine/threonine kinase and phosphorylase involved in the regulation of the phosphoenolpyruvate synthase (PEPS) by catalyzing its phosphorylation/dephosphorylation.</text>
</comment>
<comment type="catalytic activity">
    <reaction evidence="1">
        <text>[pyruvate, water dikinase] + ADP = [pyruvate, water dikinase]-phosphate + AMP + H(+)</text>
        <dbReference type="Rhea" id="RHEA:46020"/>
        <dbReference type="Rhea" id="RHEA-COMP:11425"/>
        <dbReference type="Rhea" id="RHEA-COMP:11426"/>
        <dbReference type="ChEBI" id="CHEBI:15378"/>
        <dbReference type="ChEBI" id="CHEBI:43176"/>
        <dbReference type="ChEBI" id="CHEBI:68546"/>
        <dbReference type="ChEBI" id="CHEBI:456215"/>
        <dbReference type="ChEBI" id="CHEBI:456216"/>
        <dbReference type="EC" id="2.7.11.33"/>
    </reaction>
</comment>
<comment type="catalytic activity">
    <reaction evidence="1">
        <text>[pyruvate, water dikinase]-phosphate + phosphate + H(+) = [pyruvate, water dikinase] + diphosphate</text>
        <dbReference type="Rhea" id="RHEA:48580"/>
        <dbReference type="Rhea" id="RHEA-COMP:11425"/>
        <dbReference type="Rhea" id="RHEA-COMP:11426"/>
        <dbReference type="ChEBI" id="CHEBI:15378"/>
        <dbReference type="ChEBI" id="CHEBI:33019"/>
        <dbReference type="ChEBI" id="CHEBI:43176"/>
        <dbReference type="ChEBI" id="CHEBI:43474"/>
        <dbReference type="ChEBI" id="CHEBI:68546"/>
        <dbReference type="EC" id="2.7.4.28"/>
    </reaction>
</comment>
<comment type="similarity">
    <text evidence="1">Belongs to the pyruvate, phosphate/water dikinase regulatory protein family. PSRP subfamily.</text>
</comment>
<evidence type="ECO:0000255" key="1">
    <source>
        <dbReference type="HAMAP-Rule" id="MF_01062"/>
    </source>
</evidence>
<feature type="chain" id="PRO_0000316674" description="Phosphoenolpyruvate synthase regulatory protein">
    <location>
        <begin position="1"/>
        <end position="277"/>
    </location>
</feature>
<feature type="binding site" evidence="1">
    <location>
        <begin position="157"/>
        <end position="164"/>
    </location>
    <ligand>
        <name>ADP</name>
        <dbReference type="ChEBI" id="CHEBI:456216"/>
    </ligand>
</feature>
<accession>Q0THC5</accession>